<comment type="function">
    <text evidence="4">ADP:ATP antiporter that catalyzes the exchange of ADP and ATP across the endoplasmic reticulum membrane.</text>
</comment>
<comment type="catalytic activity">
    <reaction evidence="4">
        <text>ADP(in) + ATP(out) = ADP(out) + ATP(in)</text>
        <dbReference type="Rhea" id="RHEA:34999"/>
        <dbReference type="ChEBI" id="CHEBI:30616"/>
        <dbReference type="ChEBI" id="CHEBI:456216"/>
    </reaction>
    <physiologicalReaction direction="left-to-right" evidence="4">
        <dbReference type="Rhea" id="RHEA:35000"/>
    </physiologicalReaction>
</comment>
<comment type="subcellular location">
    <subcellularLocation>
        <location evidence="4">Endoplasmic reticulum membrane</location>
        <topology evidence="4">Multi-pass membrane protein</topology>
    </subcellularLocation>
</comment>
<comment type="domain">
    <text evidence="3">The transmembrane helices are not perpendicular to the plane of the membrane, but cross the membrane at an angle. At least 2 of the odd-numbered transmembrane helices exhibit a sharp kink, due to the presence of a conserved proline residue.</text>
</comment>
<comment type="disruption phenotype">
    <text evidence="4">Dramatic growth retardation.</text>
</comment>
<comment type="similarity">
    <text evidence="5">Belongs to the mitochondrial carrier (TC 2.A.29) family.</text>
</comment>
<comment type="sequence caution" evidence="5">
    <conflict type="erroneous gene model prediction">
        <sequence resource="EMBL-CDS" id="CAC01735"/>
    </conflict>
</comment>
<reference key="1">
    <citation type="journal article" date="2000" name="Nature">
        <title>Sequence and analysis of chromosome 5 of the plant Arabidopsis thaliana.</title>
        <authorList>
            <person name="Tabata S."/>
            <person name="Kaneko T."/>
            <person name="Nakamura Y."/>
            <person name="Kotani H."/>
            <person name="Kato T."/>
            <person name="Asamizu E."/>
            <person name="Miyajima N."/>
            <person name="Sasamoto S."/>
            <person name="Kimura T."/>
            <person name="Hosouchi T."/>
            <person name="Kawashima K."/>
            <person name="Kohara M."/>
            <person name="Matsumoto M."/>
            <person name="Matsuno A."/>
            <person name="Muraki A."/>
            <person name="Nakayama S."/>
            <person name="Nakazaki N."/>
            <person name="Naruo K."/>
            <person name="Okumura S."/>
            <person name="Shinpo S."/>
            <person name="Takeuchi C."/>
            <person name="Wada T."/>
            <person name="Watanabe A."/>
            <person name="Yamada M."/>
            <person name="Yasuda M."/>
            <person name="Sato S."/>
            <person name="de la Bastide M."/>
            <person name="Huang E."/>
            <person name="Spiegel L."/>
            <person name="Gnoj L."/>
            <person name="O'Shaughnessy A."/>
            <person name="Preston R."/>
            <person name="Habermann K."/>
            <person name="Murray J."/>
            <person name="Johnson D."/>
            <person name="Rohlfing T."/>
            <person name="Nelson J."/>
            <person name="Stoneking T."/>
            <person name="Pepin K."/>
            <person name="Spieth J."/>
            <person name="Sekhon M."/>
            <person name="Armstrong J."/>
            <person name="Becker M."/>
            <person name="Belter E."/>
            <person name="Cordum H."/>
            <person name="Cordes M."/>
            <person name="Courtney L."/>
            <person name="Courtney W."/>
            <person name="Dante M."/>
            <person name="Du H."/>
            <person name="Edwards J."/>
            <person name="Fryman J."/>
            <person name="Haakensen B."/>
            <person name="Lamar E."/>
            <person name="Latreille P."/>
            <person name="Leonard S."/>
            <person name="Meyer R."/>
            <person name="Mulvaney E."/>
            <person name="Ozersky P."/>
            <person name="Riley A."/>
            <person name="Strowmatt C."/>
            <person name="Wagner-McPherson C."/>
            <person name="Wollam A."/>
            <person name="Yoakum M."/>
            <person name="Bell M."/>
            <person name="Dedhia N."/>
            <person name="Parnell L."/>
            <person name="Shah R."/>
            <person name="Rodriguez M."/>
            <person name="Hoon See L."/>
            <person name="Vil D."/>
            <person name="Baker J."/>
            <person name="Kirchoff K."/>
            <person name="Toth K."/>
            <person name="King L."/>
            <person name="Bahret A."/>
            <person name="Miller B."/>
            <person name="Marra M.A."/>
            <person name="Martienssen R."/>
            <person name="McCombie W.R."/>
            <person name="Wilson R.K."/>
            <person name="Murphy G."/>
            <person name="Bancroft I."/>
            <person name="Volckaert G."/>
            <person name="Wambutt R."/>
            <person name="Duesterhoeft A."/>
            <person name="Stiekema W."/>
            <person name="Pohl T."/>
            <person name="Entian K.-D."/>
            <person name="Terryn N."/>
            <person name="Hartley N."/>
            <person name="Bent E."/>
            <person name="Johnson S."/>
            <person name="Langham S.-A."/>
            <person name="McCullagh B."/>
            <person name="Robben J."/>
            <person name="Grymonprez B."/>
            <person name="Zimmermann W."/>
            <person name="Ramsperger U."/>
            <person name="Wedler H."/>
            <person name="Balke K."/>
            <person name="Wedler E."/>
            <person name="Peters S."/>
            <person name="van Staveren M."/>
            <person name="Dirkse W."/>
            <person name="Mooijman P."/>
            <person name="Klein Lankhorst R."/>
            <person name="Weitzenegger T."/>
            <person name="Bothe G."/>
            <person name="Rose M."/>
            <person name="Hauf J."/>
            <person name="Berneiser S."/>
            <person name="Hempel S."/>
            <person name="Feldpausch M."/>
            <person name="Lamberth S."/>
            <person name="Villarroel R."/>
            <person name="Gielen J."/>
            <person name="Ardiles W."/>
            <person name="Bents O."/>
            <person name="Lemcke K."/>
            <person name="Kolesov G."/>
            <person name="Mayer K.F.X."/>
            <person name="Rudd S."/>
            <person name="Schoof H."/>
            <person name="Schueller C."/>
            <person name="Zaccaria P."/>
            <person name="Mewes H.-W."/>
            <person name="Bevan M."/>
            <person name="Fransz P.F."/>
        </authorList>
    </citation>
    <scope>NUCLEOTIDE SEQUENCE [LARGE SCALE GENOMIC DNA]</scope>
    <source>
        <strain>cv. Columbia</strain>
    </source>
</reference>
<reference key="2">
    <citation type="journal article" date="2017" name="Plant J.">
        <title>Araport11: a complete reannotation of the Arabidopsis thaliana reference genome.</title>
        <authorList>
            <person name="Cheng C.Y."/>
            <person name="Krishnakumar V."/>
            <person name="Chan A.P."/>
            <person name="Thibaud-Nissen F."/>
            <person name="Schobel S."/>
            <person name="Town C.D."/>
        </authorList>
    </citation>
    <scope>GENOME REANNOTATION</scope>
    <source>
        <strain>cv. Columbia</strain>
    </source>
</reference>
<reference key="3">
    <citation type="submission" date="2002-03" db="EMBL/GenBank/DDBJ databases">
        <title>Full-length cDNA from Arabidopsis thaliana.</title>
        <authorList>
            <person name="Brover V.V."/>
            <person name="Troukhan M.E."/>
            <person name="Alexandrov N.A."/>
            <person name="Lu Y.-P."/>
            <person name="Flavell R.B."/>
            <person name="Feldmann K.A."/>
        </authorList>
    </citation>
    <scope>NUCLEOTIDE SEQUENCE [LARGE SCALE MRNA]</scope>
</reference>
<reference key="4">
    <citation type="journal article" date="2004" name="Trends Plant Sci.">
        <title>The growing family of mitochondrial carriers in Arabidopsis.</title>
        <authorList>
            <person name="Picault N."/>
            <person name="Hodges M."/>
            <person name="Palmieri L."/>
            <person name="Palmieri F."/>
        </authorList>
    </citation>
    <scope>GENE FAMILY</scope>
</reference>
<reference key="5">
    <citation type="journal article" date="2008" name="Plant Cell">
        <title>Identification of a novel adenine nucleotide transporter in the endoplasmic reticulum of Arabidopsis.</title>
        <authorList>
            <person name="Leroch M."/>
            <person name="Neuhaus H.E."/>
            <person name="Kirchberger S."/>
            <person name="Zimmermann S."/>
            <person name="Melzer M."/>
            <person name="Gerhold J."/>
            <person name="Tjaden J."/>
        </authorList>
    </citation>
    <scope>FUNCTION</scope>
    <scope>SUBCELLULAR LOCATION</scope>
    <scope>DISRUPTION PHENOTYPE</scope>
</reference>
<keyword id="KW-0050">Antiport</keyword>
<keyword id="KW-0256">Endoplasmic reticulum</keyword>
<keyword id="KW-0472">Membrane</keyword>
<keyword id="KW-1185">Reference proteome</keyword>
<keyword id="KW-0677">Repeat</keyword>
<keyword id="KW-0812">Transmembrane</keyword>
<keyword id="KW-1133">Transmembrane helix</keyword>
<keyword id="KW-0813">Transport</keyword>
<organism>
    <name type="scientific">Arabidopsis thaliana</name>
    <name type="common">Mouse-ear cress</name>
    <dbReference type="NCBI Taxonomy" id="3702"/>
    <lineage>
        <taxon>Eukaryota</taxon>
        <taxon>Viridiplantae</taxon>
        <taxon>Streptophyta</taxon>
        <taxon>Embryophyta</taxon>
        <taxon>Tracheophyta</taxon>
        <taxon>Spermatophyta</taxon>
        <taxon>Magnoliopsida</taxon>
        <taxon>eudicotyledons</taxon>
        <taxon>Gunneridae</taxon>
        <taxon>Pentapetalae</taxon>
        <taxon>rosids</taxon>
        <taxon>malvids</taxon>
        <taxon>Brassicales</taxon>
        <taxon>Brassicaceae</taxon>
        <taxon>Camelineae</taxon>
        <taxon>Arabidopsis</taxon>
    </lineage>
</organism>
<feature type="chain" id="PRO_0000410473" description="ADP,ATP carrier protein ER-ANT1">
    <location>
        <begin position="1"/>
        <end position="306"/>
    </location>
</feature>
<feature type="transmembrane region" description="Helical; Name=1" evidence="3">
    <location>
        <begin position="10"/>
        <end position="37"/>
    </location>
</feature>
<feature type="transmembrane region" description="Helical; Name=2" evidence="3">
    <location>
        <begin position="78"/>
        <end position="102"/>
    </location>
</feature>
<feature type="transmembrane region" description="Helical; Name=3" evidence="3">
    <location>
        <begin position="111"/>
        <end position="131"/>
    </location>
</feature>
<feature type="transmembrane region" description="Helical; Name=4" evidence="3">
    <location>
        <begin position="181"/>
        <end position="202"/>
    </location>
</feature>
<feature type="transmembrane region" description="Helical; Name=5" evidence="3">
    <location>
        <begin position="216"/>
        <end position="236"/>
    </location>
</feature>
<feature type="transmembrane region" description="Helical; Name=6" evidence="3">
    <location>
        <begin position="276"/>
        <end position="296"/>
    </location>
</feature>
<feature type="repeat" description="Solcar 1">
    <location>
        <begin position="8"/>
        <end position="101"/>
    </location>
</feature>
<feature type="repeat" description="Solcar 2">
    <location>
        <begin position="113"/>
        <end position="205"/>
    </location>
</feature>
<feature type="repeat" description="Solcar 3">
    <location>
        <begin position="213"/>
        <end position="299"/>
    </location>
</feature>
<feature type="region of interest" description="Important for transport activity" evidence="2">
    <location>
        <begin position="240"/>
        <end position="245"/>
    </location>
</feature>
<feature type="short sequence motif" description="Nucleotide carrier signature motif" evidence="1">
    <location>
        <begin position="240"/>
        <end position="245"/>
    </location>
</feature>
<feature type="binding site" evidence="1">
    <location>
        <position position="83"/>
    </location>
    <ligand>
        <name>ADP</name>
        <dbReference type="ChEBI" id="CHEBI:456216"/>
    </ligand>
</feature>
<feature type="binding site" evidence="1">
    <location>
        <position position="95"/>
    </location>
    <ligand>
        <name>ADP</name>
        <dbReference type="ChEBI" id="CHEBI:456216"/>
    </ligand>
</feature>
<feature type="binding site" evidence="1">
    <location>
        <position position="240"/>
    </location>
    <ligand>
        <name>ADP</name>
        <dbReference type="ChEBI" id="CHEBI:456216"/>
    </ligand>
</feature>
<protein>
    <recommendedName>
        <fullName>ADP,ATP carrier protein ER-ANT1</fullName>
    </recommendedName>
    <alternativeName>
        <fullName>ADP/ATP translocase ER-ANT1</fullName>
    </alternativeName>
    <alternativeName>
        <fullName>Endoplasmic reticulum-adenine nucleotide transporter 1</fullName>
        <shortName>ER-ANT1</shortName>
    </alternativeName>
</protein>
<accession>Q8LB08</accession>
<accession>F4KGZ7</accession>
<accession>Q9LF44</accession>
<gene>
    <name type="primary">ER-ANT1</name>
    <name type="ordered locus">At5g17400</name>
    <name type="ORF">T10B6_60</name>
</gene>
<sequence>MALIGKSERFSADFVMGGAAAIVAKSAAAPIERVKLLLQNQGEMIKTGHLIRPYTGLGNCFTRIYREEGVLSFWRGNQANVIRYFPTQASNFAFKGYFKNLLGCSKEKDGYLKWFAGNVASGSAAGATTSLFLYHLDYARTRLGTDAKECSVNGKRQFKGMIDVYRKTLSSDGIKGLYRGFGVSIVGITLYRGMYFGMYDTIKPIVLVGSLEGNFLASFLLGWSITTSAGVIAYPFDTLRRRMMLTSGQPVKYRNTIHALREILKSEGFYALYRGVTANMLLGVAGAGVLAGYDQLHQIAYKHWVQ</sequence>
<dbReference type="EMBL" id="AL391142">
    <property type="protein sequence ID" value="CAC01735.1"/>
    <property type="status" value="ALT_SEQ"/>
    <property type="molecule type" value="Genomic_DNA"/>
</dbReference>
<dbReference type="EMBL" id="CP002688">
    <property type="protein sequence ID" value="AED92421.1"/>
    <property type="molecule type" value="Genomic_DNA"/>
</dbReference>
<dbReference type="EMBL" id="AY087494">
    <property type="protein sequence ID" value="AAM65037.1"/>
    <property type="molecule type" value="mRNA"/>
</dbReference>
<dbReference type="PIR" id="T51577">
    <property type="entry name" value="T51577"/>
</dbReference>
<dbReference type="RefSeq" id="NP_568345.1">
    <property type="nucleotide sequence ID" value="NM_121746.4"/>
</dbReference>
<dbReference type="SMR" id="Q8LB08"/>
<dbReference type="FunCoup" id="Q8LB08">
    <property type="interactions" value="1656"/>
</dbReference>
<dbReference type="STRING" id="3702.Q8LB08"/>
<dbReference type="TCDB" id="2.A.29.1.6">
    <property type="family name" value="the mitochondrial carrier (mc) family"/>
</dbReference>
<dbReference type="PaxDb" id="3702-AT5G17400.1"/>
<dbReference type="ProteomicsDB" id="244734"/>
<dbReference type="EnsemblPlants" id="AT5G17400.1">
    <property type="protein sequence ID" value="AT5G17400.1"/>
    <property type="gene ID" value="AT5G17400"/>
</dbReference>
<dbReference type="GeneID" id="831606"/>
<dbReference type="Gramene" id="AT5G17400.1">
    <property type="protein sequence ID" value="AT5G17400.1"/>
    <property type="gene ID" value="AT5G17400"/>
</dbReference>
<dbReference type="KEGG" id="ath:AT5G17400"/>
<dbReference type="Araport" id="AT5G17400"/>
<dbReference type="TAIR" id="AT5G17400">
    <property type="gene designation" value="ER-ANT1"/>
</dbReference>
<dbReference type="eggNOG" id="KOG0749">
    <property type="taxonomic scope" value="Eukaryota"/>
</dbReference>
<dbReference type="HOGENOM" id="CLU_015166_12_0_1"/>
<dbReference type="InParanoid" id="Q8LB08"/>
<dbReference type="OMA" id="NFACKEK"/>
<dbReference type="OrthoDB" id="270584at2759"/>
<dbReference type="PRO" id="PR:Q8LB08"/>
<dbReference type="Proteomes" id="UP000006548">
    <property type="component" value="Chromosome 5"/>
</dbReference>
<dbReference type="ExpressionAtlas" id="Q8LB08">
    <property type="expression patterns" value="baseline and differential"/>
</dbReference>
<dbReference type="GO" id="GO:0005789">
    <property type="term" value="C:endoplasmic reticulum membrane"/>
    <property type="evidence" value="ECO:0000314"/>
    <property type="project" value="TAIR"/>
</dbReference>
<dbReference type="GO" id="GO:0005743">
    <property type="term" value="C:mitochondrial inner membrane"/>
    <property type="evidence" value="ECO:0007669"/>
    <property type="project" value="InterPro"/>
</dbReference>
<dbReference type="GO" id="GO:0005471">
    <property type="term" value="F:ATP:ADP antiporter activity"/>
    <property type="evidence" value="ECO:0000314"/>
    <property type="project" value="TAIR"/>
</dbReference>
<dbReference type="GO" id="GO:0051503">
    <property type="term" value="P:adenine nucleotide transport"/>
    <property type="evidence" value="ECO:0000314"/>
    <property type="project" value="TAIR"/>
</dbReference>
<dbReference type="GO" id="GO:0140021">
    <property type="term" value="P:mitochondrial ADP transmembrane transport"/>
    <property type="evidence" value="ECO:0007669"/>
    <property type="project" value="InterPro"/>
</dbReference>
<dbReference type="GO" id="GO:1990544">
    <property type="term" value="P:mitochondrial ATP transmembrane transport"/>
    <property type="evidence" value="ECO:0007669"/>
    <property type="project" value="InterPro"/>
</dbReference>
<dbReference type="GO" id="GO:0048364">
    <property type="term" value="P:root development"/>
    <property type="evidence" value="ECO:0000315"/>
    <property type="project" value="TAIR"/>
</dbReference>
<dbReference type="GO" id="GO:0048316">
    <property type="term" value="P:seed development"/>
    <property type="evidence" value="ECO:0000315"/>
    <property type="project" value="TAIR"/>
</dbReference>
<dbReference type="GO" id="GO:0048367">
    <property type="term" value="P:shoot system development"/>
    <property type="evidence" value="ECO:0000315"/>
    <property type="project" value="TAIR"/>
</dbReference>
<dbReference type="FunFam" id="1.50.40.10:FF:000065">
    <property type="entry name" value="ADP,ATP carrier protein ER-ANT1"/>
    <property type="match status" value="1"/>
</dbReference>
<dbReference type="Gene3D" id="1.50.40.10">
    <property type="entry name" value="Mitochondrial carrier domain"/>
    <property type="match status" value="1"/>
</dbReference>
<dbReference type="InterPro" id="IPR002113">
    <property type="entry name" value="ADT_euk_type"/>
</dbReference>
<dbReference type="InterPro" id="IPR002067">
    <property type="entry name" value="Mit_carrier"/>
</dbReference>
<dbReference type="InterPro" id="IPR018108">
    <property type="entry name" value="Mitochondrial_sb/sol_carrier"/>
</dbReference>
<dbReference type="InterPro" id="IPR023395">
    <property type="entry name" value="Mt_carrier_dom_sf"/>
</dbReference>
<dbReference type="PANTHER" id="PTHR45635">
    <property type="entry name" value="ADP,ATP CARRIER PROTEIN 1-RELATED-RELATED"/>
    <property type="match status" value="1"/>
</dbReference>
<dbReference type="PANTHER" id="PTHR45635:SF8">
    <property type="entry name" value="ADP,ATP CARRIER PROTEIN ER-ANT1"/>
    <property type="match status" value="1"/>
</dbReference>
<dbReference type="Pfam" id="PF00153">
    <property type="entry name" value="Mito_carr"/>
    <property type="match status" value="3"/>
</dbReference>
<dbReference type="PRINTS" id="PR00927">
    <property type="entry name" value="ADPTRNSLCASE"/>
</dbReference>
<dbReference type="PRINTS" id="PR00926">
    <property type="entry name" value="MITOCARRIER"/>
</dbReference>
<dbReference type="SUPFAM" id="SSF103506">
    <property type="entry name" value="Mitochondrial carrier"/>
    <property type="match status" value="1"/>
</dbReference>
<dbReference type="PROSITE" id="PS50920">
    <property type="entry name" value="SOLCAR"/>
    <property type="match status" value="3"/>
</dbReference>
<evidence type="ECO:0000250" key="1">
    <source>
        <dbReference type="UniProtKB" id="P02722"/>
    </source>
</evidence>
<evidence type="ECO:0000250" key="2">
    <source>
        <dbReference type="UniProtKB" id="P12235"/>
    </source>
</evidence>
<evidence type="ECO:0000250" key="3">
    <source>
        <dbReference type="UniProtKB" id="P18239"/>
    </source>
</evidence>
<evidence type="ECO:0000269" key="4">
    <source>
    </source>
</evidence>
<evidence type="ECO:0000305" key="5"/>
<name>ADT4_ARATH</name>
<proteinExistence type="evidence at transcript level"/>